<gene>
    <name type="ordered locus">At2g42885</name>
    <name type="ORF">F7D19</name>
</gene>
<feature type="signal peptide" evidence="2">
    <location>
        <begin position="1"/>
        <end position="27"/>
    </location>
</feature>
<feature type="chain" id="PRO_0000379634" description="Defensin-like protein 54">
    <location>
        <begin position="28"/>
        <end position="79"/>
    </location>
</feature>
<feature type="disulfide bond" evidence="1">
    <location>
        <begin position="39"/>
        <end position="76"/>
    </location>
</feature>
<feature type="disulfide bond" evidence="1">
    <location>
        <begin position="43"/>
        <end position="67"/>
    </location>
</feature>
<feature type="disulfide bond" evidence="1">
    <location>
        <begin position="52"/>
        <end position="74"/>
    </location>
</feature>
<feature type="disulfide bond" evidence="1">
    <location>
        <begin position="56"/>
        <end position="75"/>
    </location>
</feature>
<feature type="sequence conflict" description="In Ref. 4; BX821873." evidence="3" ref="4">
    <original>T</original>
    <variation>K</variation>
    <location>
        <position position="17"/>
    </location>
</feature>
<feature type="sequence conflict" description="In Ref. 4; BX821873." evidence="3" ref="4">
    <original>D</original>
    <variation>N</variation>
    <location>
        <position position="44"/>
    </location>
</feature>
<comment type="subcellular location">
    <subcellularLocation>
        <location evidence="1">Secreted</location>
    </subcellularLocation>
</comment>
<comment type="similarity">
    <text evidence="3">Belongs to the DEFL family.</text>
</comment>
<proteinExistence type="inferred from homology"/>
<accession>Q8GY39</accession>
<protein>
    <recommendedName>
        <fullName>Defensin-like protein 54</fullName>
    </recommendedName>
</protein>
<dbReference type="EMBL" id="AC006931">
    <property type="status" value="NOT_ANNOTATED_CDS"/>
    <property type="molecule type" value="Genomic_DNA"/>
</dbReference>
<dbReference type="EMBL" id="CP002685">
    <property type="protein sequence ID" value="AEC10181.1"/>
    <property type="molecule type" value="Genomic_DNA"/>
</dbReference>
<dbReference type="EMBL" id="AK117887">
    <property type="protein sequence ID" value="BAC42526.1"/>
    <property type="molecule type" value="mRNA"/>
</dbReference>
<dbReference type="EMBL" id="BX821873">
    <property type="status" value="NOT_ANNOTATED_CDS"/>
    <property type="molecule type" value="mRNA"/>
</dbReference>
<dbReference type="RefSeq" id="NP_850378.1">
    <property type="nucleotide sequence ID" value="NM_180047.3"/>
</dbReference>
<dbReference type="STRING" id="3702.Q8GY39"/>
<dbReference type="PaxDb" id="3702-AT2G42885.1"/>
<dbReference type="ProteomicsDB" id="224667"/>
<dbReference type="EnsemblPlants" id="AT2G42885.1">
    <property type="protein sequence ID" value="AT2G42885.1"/>
    <property type="gene ID" value="AT2G42885"/>
</dbReference>
<dbReference type="GeneID" id="818889"/>
<dbReference type="Gramene" id="AT2G42885.1">
    <property type="protein sequence ID" value="AT2G42885.1"/>
    <property type="gene ID" value="AT2G42885"/>
</dbReference>
<dbReference type="KEGG" id="ath:AT2G42885"/>
<dbReference type="Araport" id="AT2G42885"/>
<dbReference type="TAIR" id="AT2G42885"/>
<dbReference type="HOGENOM" id="CLU_165205_2_0_1"/>
<dbReference type="InParanoid" id="Q8GY39"/>
<dbReference type="OMA" id="ARCCCIR"/>
<dbReference type="OrthoDB" id="1024155at2759"/>
<dbReference type="PhylomeDB" id="Q8GY39"/>
<dbReference type="PRO" id="PR:Q8GY39"/>
<dbReference type="Proteomes" id="UP000006548">
    <property type="component" value="Chromosome 2"/>
</dbReference>
<dbReference type="ExpressionAtlas" id="Q8GY39">
    <property type="expression patterns" value="baseline and differential"/>
</dbReference>
<dbReference type="GO" id="GO:0005576">
    <property type="term" value="C:extracellular region"/>
    <property type="evidence" value="ECO:0007669"/>
    <property type="project" value="UniProtKB-SubCell"/>
</dbReference>
<dbReference type="GO" id="GO:0050832">
    <property type="term" value="P:defense response to fungus"/>
    <property type="evidence" value="ECO:0007669"/>
    <property type="project" value="UniProtKB-KW"/>
</dbReference>
<dbReference type="GO" id="GO:0031640">
    <property type="term" value="P:killing of cells of another organism"/>
    <property type="evidence" value="ECO:0007669"/>
    <property type="project" value="UniProtKB-KW"/>
</dbReference>
<keyword id="KW-0929">Antimicrobial</keyword>
<keyword id="KW-1015">Disulfide bond</keyword>
<keyword id="KW-0295">Fungicide</keyword>
<keyword id="KW-0611">Plant defense</keyword>
<keyword id="KW-1185">Reference proteome</keyword>
<keyword id="KW-0964">Secreted</keyword>
<keyword id="KW-0732">Signal</keyword>
<name>DEF54_ARATH</name>
<sequence length="79" mass="8777">MGIKKTSATVFLVIILTISFSYYDVEAESVIEPAKYGACLFLCDARRDDHACFYDCTNVAIYRTGHCVGNPPRCCCIRG</sequence>
<reference key="1">
    <citation type="journal article" date="1999" name="Nature">
        <title>Sequence and analysis of chromosome 2 of the plant Arabidopsis thaliana.</title>
        <authorList>
            <person name="Lin X."/>
            <person name="Kaul S."/>
            <person name="Rounsley S.D."/>
            <person name="Shea T.P."/>
            <person name="Benito M.-I."/>
            <person name="Town C.D."/>
            <person name="Fujii C.Y."/>
            <person name="Mason T.M."/>
            <person name="Bowman C.L."/>
            <person name="Barnstead M.E."/>
            <person name="Feldblyum T.V."/>
            <person name="Buell C.R."/>
            <person name="Ketchum K.A."/>
            <person name="Lee J.J."/>
            <person name="Ronning C.M."/>
            <person name="Koo H.L."/>
            <person name="Moffat K.S."/>
            <person name="Cronin L.A."/>
            <person name="Shen M."/>
            <person name="Pai G."/>
            <person name="Van Aken S."/>
            <person name="Umayam L."/>
            <person name="Tallon L.J."/>
            <person name="Gill J.E."/>
            <person name="Adams M.D."/>
            <person name="Carrera A.J."/>
            <person name="Creasy T.H."/>
            <person name="Goodman H.M."/>
            <person name="Somerville C.R."/>
            <person name="Copenhaver G.P."/>
            <person name="Preuss D."/>
            <person name="Nierman W.C."/>
            <person name="White O."/>
            <person name="Eisen J.A."/>
            <person name="Salzberg S.L."/>
            <person name="Fraser C.M."/>
            <person name="Venter J.C."/>
        </authorList>
    </citation>
    <scope>NUCLEOTIDE SEQUENCE [LARGE SCALE GENOMIC DNA]</scope>
    <source>
        <strain>cv. Columbia</strain>
    </source>
</reference>
<reference key="2">
    <citation type="journal article" date="2017" name="Plant J.">
        <title>Araport11: a complete reannotation of the Arabidopsis thaliana reference genome.</title>
        <authorList>
            <person name="Cheng C.Y."/>
            <person name="Krishnakumar V."/>
            <person name="Chan A.P."/>
            <person name="Thibaud-Nissen F."/>
            <person name="Schobel S."/>
            <person name="Town C.D."/>
        </authorList>
    </citation>
    <scope>GENOME REANNOTATION</scope>
    <source>
        <strain>cv. Columbia</strain>
    </source>
</reference>
<reference key="3">
    <citation type="journal article" date="2002" name="Science">
        <title>Functional annotation of a full-length Arabidopsis cDNA collection.</title>
        <authorList>
            <person name="Seki M."/>
            <person name="Narusaka M."/>
            <person name="Kamiya A."/>
            <person name="Ishida J."/>
            <person name="Satou M."/>
            <person name="Sakurai T."/>
            <person name="Nakajima M."/>
            <person name="Enju A."/>
            <person name="Akiyama K."/>
            <person name="Oono Y."/>
            <person name="Muramatsu M."/>
            <person name="Hayashizaki Y."/>
            <person name="Kawai J."/>
            <person name="Carninci P."/>
            <person name="Itoh M."/>
            <person name="Ishii Y."/>
            <person name="Arakawa T."/>
            <person name="Shibata K."/>
            <person name="Shinagawa A."/>
            <person name="Shinozaki K."/>
        </authorList>
    </citation>
    <scope>NUCLEOTIDE SEQUENCE [LARGE SCALE MRNA]</scope>
    <source>
        <strain>cv. Columbia</strain>
    </source>
</reference>
<reference key="4">
    <citation type="journal article" date="2004" name="Genome Res.">
        <title>Whole genome sequence comparisons and 'full-length' cDNA sequences: a combined approach to evaluate and improve Arabidopsis genome annotation.</title>
        <authorList>
            <person name="Castelli V."/>
            <person name="Aury J.-M."/>
            <person name="Jaillon O."/>
            <person name="Wincker P."/>
            <person name="Clepet C."/>
            <person name="Menard M."/>
            <person name="Cruaud C."/>
            <person name="Quetier F."/>
            <person name="Scarpelli C."/>
            <person name="Schaechter V."/>
            <person name="Temple G."/>
            <person name="Caboche M."/>
            <person name="Weissenbach J."/>
            <person name="Salanoubat M."/>
        </authorList>
    </citation>
    <scope>NUCLEOTIDE SEQUENCE [LARGE SCALE MRNA] OF 4-79</scope>
    <source>
        <strain>cv. Columbia</strain>
    </source>
</reference>
<reference key="5">
    <citation type="journal article" date="2005" name="Plant Physiol.">
        <title>Genome organization of more than 300 defensin-like genes in Arabidopsis.</title>
        <authorList>
            <person name="Silverstein K.A.T."/>
            <person name="Graham M.A."/>
            <person name="Paape T.D."/>
            <person name="VandenBosch K.A."/>
        </authorList>
    </citation>
    <scope>GENE FAMILY</scope>
</reference>
<organism>
    <name type="scientific">Arabidopsis thaliana</name>
    <name type="common">Mouse-ear cress</name>
    <dbReference type="NCBI Taxonomy" id="3702"/>
    <lineage>
        <taxon>Eukaryota</taxon>
        <taxon>Viridiplantae</taxon>
        <taxon>Streptophyta</taxon>
        <taxon>Embryophyta</taxon>
        <taxon>Tracheophyta</taxon>
        <taxon>Spermatophyta</taxon>
        <taxon>Magnoliopsida</taxon>
        <taxon>eudicotyledons</taxon>
        <taxon>Gunneridae</taxon>
        <taxon>Pentapetalae</taxon>
        <taxon>rosids</taxon>
        <taxon>malvids</taxon>
        <taxon>Brassicales</taxon>
        <taxon>Brassicaceae</taxon>
        <taxon>Camelineae</taxon>
        <taxon>Arabidopsis</taxon>
    </lineage>
</organism>
<evidence type="ECO:0000250" key="1"/>
<evidence type="ECO:0000255" key="2"/>
<evidence type="ECO:0000305" key="3"/>